<proteinExistence type="inferred from homology"/>
<sequence length="240" mass="26571">MNAEKSPENHNVDHEEIAKFEAVASRWWDLEGEFKPLHRINPLRLGYIAERAGGLFGKKVLDVGCGGGILAESMAREGATVTGLDMGFEPLQVAKLHALESGIQVDYVQETVEEHAAKHAGQYDVVTCMEMLEHVPDPQSVVRACAQLVKPGGDVFFSTLNRNGKSWLMAVVGAEYILRMVPKGTHDVKKFIKPAELLGWVDQTSLKERHITGLHYNPITNSFKLGPGVDVNYMLHTQNK</sequence>
<gene>
    <name evidence="1" type="primary">ubiG</name>
    <name type="ordered locus">SF2312</name>
    <name type="ordered locus">S2445</name>
</gene>
<comment type="function">
    <text evidence="1">O-methyltransferase that catalyzes the 2 O-methylation steps in the ubiquinone biosynthetic pathway.</text>
</comment>
<comment type="catalytic activity">
    <reaction evidence="1">
        <text>a 3-demethylubiquinol + S-adenosyl-L-methionine = a ubiquinol + S-adenosyl-L-homocysteine + H(+)</text>
        <dbReference type="Rhea" id="RHEA:44380"/>
        <dbReference type="Rhea" id="RHEA-COMP:9566"/>
        <dbReference type="Rhea" id="RHEA-COMP:10914"/>
        <dbReference type="ChEBI" id="CHEBI:15378"/>
        <dbReference type="ChEBI" id="CHEBI:17976"/>
        <dbReference type="ChEBI" id="CHEBI:57856"/>
        <dbReference type="ChEBI" id="CHEBI:59789"/>
        <dbReference type="ChEBI" id="CHEBI:84422"/>
        <dbReference type="EC" id="2.1.1.64"/>
    </reaction>
</comment>
<comment type="catalytic activity">
    <reaction evidence="1">
        <text>a 3-(all-trans-polyprenyl)benzene-1,2-diol + S-adenosyl-L-methionine = a 2-methoxy-6-(all-trans-polyprenyl)phenol + S-adenosyl-L-homocysteine + H(+)</text>
        <dbReference type="Rhea" id="RHEA:31411"/>
        <dbReference type="Rhea" id="RHEA-COMP:9550"/>
        <dbReference type="Rhea" id="RHEA-COMP:9551"/>
        <dbReference type="ChEBI" id="CHEBI:15378"/>
        <dbReference type="ChEBI" id="CHEBI:57856"/>
        <dbReference type="ChEBI" id="CHEBI:59789"/>
        <dbReference type="ChEBI" id="CHEBI:62729"/>
        <dbReference type="ChEBI" id="CHEBI:62731"/>
        <dbReference type="EC" id="2.1.1.222"/>
    </reaction>
</comment>
<comment type="pathway">
    <text evidence="1">Cofactor biosynthesis; ubiquinone biosynthesis.</text>
</comment>
<comment type="similarity">
    <text evidence="1">Belongs to the methyltransferase superfamily. UbiG/COQ3 family.</text>
</comment>
<reference key="1">
    <citation type="journal article" date="2002" name="Nucleic Acids Res.">
        <title>Genome sequence of Shigella flexneri 2a: insights into pathogenicity through comparison with genomes of Escherichia coli K12 and O157.</title>
        <authorList>
            <person name="Jin Q."/>
            <person name="Yuan Z."/>
            <person name="Xu J."/>
            <person name="Wang Y."/>
            <person name="Shen Y."/>
            <person name="Lu W."/>
            <person name="Wang J."/>
            <person name="Liu H."/>
            <person name="Yang J."/>
            <person name="Yang F."/>
            <person name="Zhang X."/>
            <person name="Zhang J."/>
            <person name="Yang G."/>
            <person name="Wu H."/>
            <person name="Qu D."/>
            <person name="Dong J."/>
            <person name="Sun L."/>
            <person name="Xue Y."/>
            <person name="Zhao A."/>
            <person name="Gao Y."/>
            <person name="Zhu J."/>
            <person name="Kan B."/>
            <person name="Ding K."/>
            <person name="Chen S."/>
            <person name="Cheng H."/>
            <person name="Yao Z."/>
            <person name="He B."/>
            <person name="Chen R."/>
            <person name="Ma D."/>
            <person name="Qiang B."/>
            <person name="Wen Y."/>
            <person name="Hou Y."/>
            <person name="Yu J."/>
        </authorList>
    </citation>
    <scope>NUCLEOTIDE SEQUENCE [LARGE SCALE GENOMIC DNA]</scope>
    <source>
        <strain>301 / Serotype 2a</strain>
    </source>
</reference>
<reference key="2">
    <citation type="journal article" date="2003" name="Infect. Immun.">
        <title>Complete genome sequence and comparative genomics of Shigella flexneri serotype 2a strain 2457T.</title>
        <authorList>
            <person name="Wei J."/>
            <person name="Goldberg M.B."/>
            <person name="Burland V."/>
            <person name="Venkatesan M.M."/>
            <person name="Deng W."/>
            <person name="Fournier G."/>
            <person name="Mayhew G.F."/>
            <person name="Plunkett G. III"/>
            <person name="Rose D.J."/>
            <person name="Darling A."/>
            <person name="Mau B."/>
            <person name="Perna N.T."/>
            <person name="Payne S.M."/>
            <person name="Runyen-Janecky L.J."/>
            <person name="Zhou S."/>
            <person name="Schwartz D.C."/>
            <person name="Blattner F.R."/>
        </authorList>
    </citation>
    <scope>NUCLEOTIDE SEQUENCE [LARGE SCALE GENOMIC DNA]</scope>
    <source>
        <strain>ATCC 700930 / 2457T / Serotype 2a</strain>
    </source>
</reference>
<protein>
    <recommendedName>
        <fullName evidence="1">Ubiquinone biosynthesis O-methyltransferase</fullName>
    </recommendedName>
    <alternativeName>
        <fullName evidence="1">2-polyprenyl-6-hydroxyphenol methylase</fullName>
        <ecNumber evidence="1">2.1.1.222</ecNumber>
    </alternativeName>
    <alternativeName>
        <fullName evidence="1">3-demethylubiquinone 3-O-methyltransferase</fullName>
        <ecNumber evidence="1">2.1.1.64</ecNumber>
    </alternativeName>
</protein>
<feature type="chain" id="PRO_0000193404" description="Ubiquinone biosynthesis O-methyltransferase">
    <location>
        <begin position="1"/>
        <end position="240"/>
    </location>
</feature>
<feature type="binding site" evidence="1">
    <location>
        <position position="44"/>
    </location>
    <ligand>
        <name>S-adenosyl-L-methionine</name>
        <dbReference type="ChEBI" id="CHEBI:59789"/>
    </ligand>
</feature>
<feature type="binding site" evidence="1">
    <location>
        <position position="64"/>
    </location>
    <ligand>
        <name>S-adenosyl-L-methionine</name>
        <dbReference type="ChEBI" id="CHEBI:59789"/>
    </ligand>
</feature>
<feature type="binding site" evidence="1">
    <location>
        <position position="85"/>
    </location>
    <ligand>
        <name>S-adenosyl-L-methionine</name>
        <dbReference type="ChEBI" id="CHEBI:59789"/>
    </ligand>
</feature>
<feature type="binding site" evidence="1">
    <location>
        <position position="129"/>
    </location>
    <ligand>
        <name>S-adenosyl-L-methionine</name>
        <dbReference type="ChEBI" id="CHEBI:59789"/>
    </ligand>
</feature>
<dbReference type="EC" id="2.1.1.222" evidence="1"/>
<dbReference type="EC" id="2.1.1.64" evidence="1"/>
<dbReference type="EMBL" id="AE005674">
    <property type="protein sequence ID" value="AAN43828.1"/>
    <property type="molecule type" value="Genomic_DNA"/>
</dbReference>
<dbReference type="EMBL" id="AE014073">
    <property type="protein sequence ID" value="AAP17646.1"/>
    <property type="molecule type" value="Genomic_DNA"/>
</dbReference>
<dbReference type="RefSeq" id="NP_708121.1">
    <property type="nucleotide sequence ID" value="NC_004337.2"/>
</dbReference>
<dbReference type="RefSeq" id="WP_000990752.1">
    <property type="nucleotide sequence ID" value="NZ_WPGW01000103.1"/>
</dbReference>
<dbReference type="SMR" id="Q820C5"/>
<dbReference type="STRING" id="198214.SF2312"/>
<dbReference type="PaxDb" id="198214-SF2312"/>
<dbReference type="DNASU" id="1078729"/>
<dbReference type="GeneID" id="1025473"/>
<dbReference type="GeneID" id="93774945"/>
<dbReference type="KEGG" id="sfl:SF2312"/>
<dbReference type="KEGG" id="sfx:S2445"/>
<dbReference type="PATRIC" id="fig|198214.7.peg.2770"/>
<dbReference type="HOGENOM" id="CLU_042432_5_0_6"/>
<dbReference type="UniPathway" id="UPA00232"/>
<dbReference type="Proteomes" id="UP000001006">
    <property type="component" value="Chromosome"/>
</dbReference>
<dbReference type="Proteomes" id="UP000002673">
    <property type="component" value="Chromosome"/>
</dbReference>
<dbReference type="GO" id="GO:0102208">
    <property type="term" value="F:2-polyprenyl-6-hydroxyphenol methylase activity"/>
    <property type="evidence" value="ECO:0007669"/>
    <property type="project" value="UniProtKB-EC"/>
</dbReference>
<dbReference type="GO" id="GO:0061542">
    <property type="term" value="F:3-demethylubiquinol 3-O-methyltransferase activity"/>
    <property type="evidence" value="ECO:0007669"/>
    <property type="project" value="UniProtKB-UniRule"/>
</dbReference>
<dbReference type="GO" id="GO:0010420">
    <property type="term" value="F:polyprenyldihydroxybenzoate methyltransferase activity"/>
    <property type="evidence" value="ECO:0007669"/>
    <property type="project" value="InterPro"/>
</dbReference>
<dbReference type="GO" id="GO:0032259">
    <property type="term" value="P:methylation"/>
    <property type="evidence" value="ECO:0007669"/>
    <property type="project" value="UniProtKB-KW"/>
</dbReference>
<dbReference type="CDD" id="cd02440">
    <property type="entry name" value="AdoMet_MTases"/>
    <property type="match status" value="1"/>
</dbReference>
<dbReference type="FunFam" id="3.40.50.150:FF:000028">
    <property type="entry name" value="Ubiquinone biosynthesis O-methyltransferase"/>
    <property type="match status" value="1"/>
</dbReference>
<dbReference type="Gene3D" id="3.40.50.150">
    <property type="entry name" value="Vaccinia Virus protein VP39"/>
    <property type="match status" value="1"/>
</dbReference>
<dbReference type="HAMAP" id="MF_00472">
    <property type="entry name" value="UbiG"/>
    <property type="match status" value="1"/>
</dbReference>
<dbReference type="InterPro" id="IPR029063">
    <property type="entry name" value="SAM-dependent_MTases_sf"/>
</dbReference>
<dbReference type="InterPro" id="IPR010233">
    <property type="entry name" value="UbiG_MeTrfase"/>
</dbReference>
<dbReference type="NCBIfam" id="TIGR01983">
    <property type="entry name" value="UbiG"/>
    <property type="match status" value="1"/>
</dbReference>
<dbReference type="PANTHER" id="PTHR43464">
    <property type="entry name" value="METHYLTRANSFERASE"/>
    <property type="match status" value="1"/>
</dbReference>
<dbReference type="PANTHER" id="PTHR43464:SF19">
    <property type="entry name" value="UBIQUINONE BIOSYNTHESIS O-METHYLTRANSFERASE, MITOCHONDRIAL"/>
    <property type="match status" value="1"/>
</dbReference>
<dbReference type="Pfam" id="PF13489">
    <property type="entry name" value="Methyltransf_23"/>
    <property type="match status" value="1"/>
</dbReference>
<dbReference type="SUPFAM" id="SSF53335">
    <property type="entry name" value="S-adenosyl-L-methionine-dependent methyltransferases"/>
    <property type="match status" value="1"/>
</dbReference>
<organism>
    <name type="scientific">Shigella flexneri</name>
    <dbReference type="NCBI Taxonomy" id="623"/>
    <lineage>
        <taxon>Bacteria</taxon>
        <taxon>Pseudomonadati</taxon>
        <taxon>Pseudomonadota</taxon>
        <taxon>Gammaproteobacteria</taxon>
        <taxon>Enterobacterales</taxon>
        <taxon>Enterobacteriaceae</taxon>
        <taxon>Shigella</taxon>
    </lineage>
</organism>
<accession>Q820C5</accession>
<keyword id="KW-0489">Methyltransferase</keyword>
<keyword id="KW-1185">Reference proteome</keyword>
<keyword id="KW-0949">S-adenosyl-L-methionine</keyword>
<keyword id="KW-0808">Transferase</keyword>
<keyword id="KW-0831">Ubiquinone biosynthesis</keyword>
<evidence type="ECO:0000255" key="1">
    <source>
        <dbReference type="HAMAP-Rule" id="MF_00472"/>
    </source>
</evidence>
<name>UBIG_SHIFL</name>